<proteinExistence type="evidence at protein level"/>
<reference evidence="3" key="1">
    <citation type="journal article" date="2009" name="J. Plant Physiol.">
        <title>Analysis of the soluble cell wall proteome of gymnosperms.</title>
        <authorList>
            <person name="Uzal E.N."/>
            <person name="Gomez-Ros L.V."/>
            <person name="Hernandez J.A."/>
            <person name="Pedreno M.A."/>
            <person name="Cuello J."/>
            <person name="Ros Barcelo A."/>
        </authorList>
    </citation>
    <scope>PROTEIN SEQUENCE</scope>
    <scope>SUBCELLULAR LOCATION</scope>
    <source>
        <strain evidence="1">PC-801</strain>
        <tissue evidence="1">Callus</tissue>
    </source>
</reference>
<organism>
    <name type="scientific">Pinus halepensis</name>
    <name type="common">Aleppo pine</name>
    <dbReference type="NCBI Taxonomy" id="71633"/>
    <lineage>
        <taxon>Eukaryota</taxon>
        <taxon>Viridiplantae</taxon>
        <taxon>Streptophyta</taxon>
        <taxon>Embryophyta</taxon>
        <taxon>Tracheophyta</taxon>
        <taxon>Spermatophyta</taxon>
        <taxon>Pinopsida</taxon>
        <taxon>Pinidae</taxon>
        <taxon>Conifers I</taxon>
        <taxon>Pinales</taxon>
        <taxon>Pinaceae</taxon>
        <taxon>Pinus</taxon>
        <taxon>Pinus subgen. Pinus</taxon>
    </lineage>
</organism>
<evidence type="ECO:0000269" key="1">
    <source>
    </source>
</evidence>
<evidence type="ECO:0000303" key="2">
    <source>
    </source>
</evidence>
<evidence type="ECO:0000305" key="3"/>
<feature type="chain" id="PRO_0000326450" description="Unknown protein 8">
    <location>
        <begin position="1" status="less than"/>
        <end position="12" status="greater than"/>
    </location>
</feature>
<feature type="unsure residue" description="L or I">
    <location>
        <position position="2"/>
    </location>
</feature>
<feature type="unsure residue" description="L or I">
    <location>
        <position position="8"/>
    </location>
</feature>
<feature type="non-terminal residue" evidence="2">
    <location>
        <position position="1"/>
    </location>
</feature>
<feature type="non-terminal residue" evidence="2">
    <location>
        <position position="12"/>
    </location>
</feature>
<sequence length="12" mass="1469">WLRMASGLTDYR</sequence>
<dbReference type="GO" id="GO:0005576">
    <property type="term" value="C:extracellular region"/>
    <property type="evidence" value="ECO:0007669"/>
    <property type="project" value="UniProtKB-KW"/>
</dbReference>
<keyword id="KW-0134">Cell wall</keyword>
<keyword id="KW-0903">Direct protein sequencing</keyword>
<keyword id="KW-0964">Secreted</keyword>
<accession>P85492</accession>
<protein>
    <recommendedName>
        <fullName>Unknown protein 8</fullName>
    </recommendedName>
</protein>
<comment type="subcellular location">
    <subcellularLocation>
        <location evidence="1">Secreted</location>
        <location evidence="1">Cell wall</location>
    </subcellularLocation>
</comment>
<name>UP08_PINHA</name>